<evidence type="ECO:0000250" key="1">
    <source>
        <dbReference type="UniProtKB" id="Q54873"/>
    </source>
</evidence>
<evidence type="ECO:0000255" key="2">
    <source>
        <dbReference type="PROSITE-ProRule" id="PRU00648"/>
    </source>
</evidence>
<evidence type="ECO:0000269" key="3">
    <source>
    </source>
</evidence>
<evidence type="ECO:0000303" key="4">
    <source>
    </source>
</evidence>
<evidence type="ECO:0000305" key="5"/>
<evidence type="ECO:0000312" key="6">
    <source>
        <dbReference type="EMBL" id="REF35884.1"/>
    </source>
</evidence>
<keyword id="KW-0456">Lyase</keyword>
<keyword id="KW-1185">Reference proteome</keyword>
<keyword id="KW-0732">Signal</keyword>
<feature type="signal peptide" description="Tat-type signal" evidence="2">
    <location>
        <begin position="1"/>
        <end position="33"/>
    </location>
</feature>
<feature type="chain" id="PRO_5017671870" description="Hyaluronate lyase">
    <location>
        <begin position="34"/>
        <end position="778"/>
    </location>
</feature>
<feature type="active site" evidence="1">
    <location>
        <position position="200"/>
    </location>
</feature>
<feature type="active site" evidence="1">
    <location>
        <position position="250"/>
    </location>
</feature>
<feature type="active site" evidence="1">
    <location>
        <position position="259"/>
    </location>
</feature>
<gene>
    <name evidence="4" type="primary">tchly8B</name>
    <name evidence="6" type="ORF">DFJ64_1276</name>
</gene>
<comment type="function">
    <text evidence="3">Degrades hyaluronic acid into unsaturated disaccharides as the end products (PubMed:33561520). Exhibits very low activity against various types of chondroitin sulfate variants (PubMed:33561520).</text>
</comment>
<comment type="catalytic activity">
    <reaction evidence="3">
        <text>[hyaluronan](n) = n 3-(4-deoxy-beta-D-gluc-4-enuronosyl)-N-acetyl-D-glucosamine + H2O</text>
        <dbReference type="Rhea" id="RHEA:50240"/>
        <dbReference type="Rhea" id="RHEA-COMP:12583"/>
        <dbReference type="ChEBI" id="CHEBI:15377"/>
        <dbReference type="ChEBI" id="CHEBI:132151"/>
        <dbReference type="ChEBI" id="CHEBI:132153"/>
        <dbReference type="EC" id="4.2.2.1"/>
    </reaction>
</comment>
<comment type="activity regulation">
    <text evidence="3">Is salt-dependent and is active over a wide range of NaCl concentrations. Activity is slightly promoted by Ni(2+), and inhibited by most of the tested metal ions, including Li(+), K(+), Ba(2+), Mg(2+), Zn(2+), Ca(2+), Mn(2+) and Al(3+).</text>
</comment>
<comment type="biophysicochemical properties">
    <phDependence>
        <text evidence="3">Optimum pH is 6.6. Activity is completely abolished above pH 8.6.</text>
    </phDependence>
    <temperatureDependence>
        <text evidence="3">Optimum temperature is 70 degrees Celsius. Is very stable at temperatures from 0 to 60 degrees Celsius.</text>
    </temperatureDependence>
</comment>
<comment type="PTM">
    <text evidence="2">Predicted to be exported by the Tat system. The position of the signal peptide cleavage has not been experimentally proven.</text>
</comment>
<comment type="biotechnology">
    <text evidence="3">Due to its high optimal temperature and stability under a broad pH range and high temperature, TcHly8B could serve as a promising tool for the industrial production of hyaluronate oligosaccharides and promote the further exploitation of hyaluronate lyases with novel properties.</text>
</comment>
<comment type="similarity">
    <text evidence="5">Belongs to the polysaccharide lyase 8 family.</text>
</comment>
<proteinExistence type="evidence at protein level"/>
<protein>
    <recommendedName>
        <fullName evidence="4">Hyaluronate lyase</fullName>
        <ecNumber evidence="3">4.2.2.1</ecNumber>
    </recommendedName>
    <alternativeName>
        <fullName evidence="4">Hyaluronidase</fullName>
        <shortName evidence="5">HYase</shortName>
    </alternativeName>
    <alternativeName>
        <fullName evidence="4">TcHly8B</fullName>
    </alternativeName>
</protein>
<sequence>MSWNRRSFLGALGVTCLAGAGMVPIVRPRTAAAADEFDLLRERWCSLVTGSGYDPDVEPFKSRLAALGAEAEQYLTTLAPGETSLWPDLPLDTSTWNMTLSARRLRTMAVAYLVPGTGHTGNSAMAEAAVTAFDELTTRFYAPPHWWGNWWDWLIGTPQALNDFCALLYEQLGPELIDRYVQRVDHYVDPGAIDRTTGANRGWLCEVTAVRGVLGKSPEMMAKARDGLSPIMVYVTDGDGFYRDGSFIQHEYYAYTGSYGISLLQSVSGLFALLAGSTWEIVDPNRQVLFDSIENSFAPFVYNGLLMDAVAGRVISREAEHDHWRGHLLAASVLRMAEAGSPEEAKRWRGIVKGWLLRESEPRYMGDQTLTMAAVADAQAVLDDPTIEPLPEPVEHRIFAAMDQAVHRRPTWAFSISMRSVRTAFYETINGENLKGWHTGVGMTYWWGADFGNDHYTDGFWPTADPYRLPGTTVSRKPLEDGVGNNVLPTEAWAGGTTDGEFAAVGQSIQALESTLRGRKSWFCLDDAVVCLGAGITCADGYAVDTTVDQRNLGENGVHDFRLNGIPSPTSGTWSLTVPNARWAHLEGFGGYVFPGGARVSAIRETRTGSWYDINVGGPRDELRRRYVTVYLDHGVDPVDASYVYLVMPGATRQETIRRAADRRWLRVLANTADRQAISVPSLGFVGANFFAPGTVDALTVDQPCSVLVRVADGRATICVSDPRQDGSTVRVTWNRPVASVVSSDPTVRVVEAGERLVLDVTVEETAGMTQRAVVALA</sequence>
<accession>A0A3D9VCI6</accession>
<dbReference type="EC" id="4.2.2.1" evidence="3"/>
<dbReference type="EMBL" id="QTUC01000001">
    <property type="protein sequence ID" value="REF35884.1"/>
    <property type="molecule type" value="Genomic_DNA"/>
</dbReference>
<dbReference type="RefSeq" id="WP_115849595.1">
    <property type="nucleotide sequence ID" value="NZ_QTUC01000001.1"/>
</dbReference>
<dbReference type="SMR" id="A0A3D9VCI6"/>
<dbReference type="OrthoDB" id="6636047at2"/>
<dbReference type="Proteomes" id="UP000256485">
    <property type="component" value="Unassembled WGS sequence"/>
</dbReference>
<dbReference type="GO" id="GO:0005576">
    <property type="term" value="C:extracellular region"/>
    <property type="evidence" value="ECO:0007669"/>
    <property type="project" value="InterPro"/>
</dbReference>
<dbReference type="GO" id="GO:0030246">
    <property type="term" value="F:carbohydrate binding"/>
    <property type="evidence" value="ECO:0007669"/>
    <property type="project" value="InterPro"/>
</dbReference>
<dbReference type="GO" id="GO:0016837">
    <property type="term" value="F:carbon-oxygen lyase activity, acting on polysaccharides"/>
    <property type="evidence" value="ECO:0007669"/>
    <property type="project" value="UniProtKB-ARBA"/>
</dbReference>
<dbReference type="GO" id="GO:0005975">
    <property type="term" value="P:carbohydrate metabolic process"/>
    <property type="evidence" value="ECO:0007669"/>
    <property type="project" value="InterPro"/>
</dbReference>
<dbReference type="CDD" id="cd01083">
    <property type="entry name" value="GAG_Lyase"/>
    <property type="match status" value="1"/>
</dbReference>
<dbReference type="Gene3D" id="2.70.98.10">
    <property type="match status" value="1"/>
</dbReference>
<dbReference type="Gene3D" id="1.50.10.100">
    <property type="entry name" value="Chondroitin AC/alginate lyase"/>
    <property type="match status" value="1"/>
</dbReference>
<dbReference type="Gene3D" id="2.60.220.10">
    <property type="entry name" value="Polysaccharide lyase family 8-like, C-terminal"/>
    <property type="match status" value="1"/>
</dbReference>
<dbReference type="InterPro" id="IPR008929">
    <property type="entry name" value="Chondroitin_lyas"/>
</dbReference>
<dbReference type="InterPro" id="IPR011013">
    <property type="entry name" value="Gal_mutarotase_sf_dom"/>
</dbReference>
<dbReference type="InterPro" id="IPR014718">
    <property type="entry name" value="GH-type_carb-bd"/>
</dbReference>
<dbReference type="InterPro" id="IPR038970">
    <property type="entry name" value="Lyase_8"/>
</dbReference>
<dbReference type="InterPro" id="IPR011071">
    <property type="entry name" value="Lyase_8-like_C"/>
</dbReference>
<dbReference type="InterPro" id="IPR012970">
    <property type="entry name" value="Lyase_8_alpha_N"/>
</dbReference>
<dbReference type="InterPro" id="IPR004103">
    <property type="entry name" value="Lyase_8_C"/>
</dbReference>
<dbReference type="InterPro" id="IPR003159">
    <property type="entry name" value="Lyase_8_central_dom"/>
</dbReference>
<dbReference type="InterPro" id="IPR006311">
    <property type="entry name" value="TAT_signal"/>
</dbReference>
<dbReference type="PANTHER" id="PTHR38481">
    <property type="entry name" value="HYALURONATE LYASE"/>
    <property type="match status" value="1"/>
</dbReference>
<dbReference type="PANTHER" id="PTHR38481:SF1">
    <property type="entry name" value="HYALURONATE LYASE"/>
    <property type="match status" value="1"/>
</dbReference>
<dbReference type="Pfam" id="PF02278">
    <property type="entry name" value="Lyase_8"/>
    <property type="match status" value="1"/>
</dbReference>
<dbReference type="Pfam" id="PF02884">
    <property type="entry name" value="Lyase_8_C"/>
    <property type="match status" value="1"/>
</dbReference>
<dbReference type="Pfam" id="PF08124">
    <property type="entry name" value="Lyase_8_N"/>
    <property type="match status" value="1"/>
</dbReference>
<dbReference type="SUPFAM" id="SSF48230">
    <property type="entry name" value="Chondroitin AC/alginate lyase"/>
    <property type="match status" value="1"/>
</dbReference>
<dbReference type="SUPFAM" id="SSF74650">
    <property type="entry name" value="Galactose mutarotase-like"/>
    <property type="match status" value="1"/>
</dbReference>
<dbReference type="SUPFAM" id="SSF49863">
    <property type="entry name" value="Hyaluronate lyase-like, C-terminal domain"/>
    <property type="match status" value="1"/>
</dbReference>
<dbReference type="PROSITE" id="PS51318">
    <property type="entry name" value="TAT"/>
    <property type="match status" value="1"/>
</dbReference>
<organism>
    <name type="scientific">Thermasporomyces composti</name>
    <dbReference type="NCBI Taxonomy" id="696763"/>
    <lineage>
        <taxon>Bacteria</taxon>
        <taxon>Bacillati</taxon>
        <taxon>Actinomycetota</taxon>
        <taxon>Actinomycetes</taxon>
        <taxon>Propionibacteriales</taxon>
        <taxon>Nocardioidaceae</taxon>
        <taxon>Thermasporomyces</taxon>
    </lineage>
</organism>
<name>HYSA_THECX</name>
<reference key="1">
    <citation type="submission" date="2018-08" db="EMBL/GenBank/DDBJ databases">
        <title>Sequencing the genomes of 1000 actinobacteria strains.</title>
        <authorList>
            <person name="Klenk H.-P."/>
        </authorList>
    </citation>
    <scope>NUCLEOTIDE SEQUENCE [LARGE SCALE GENOMIC DNA]</scope>
    <source>
        <strain>DSM 22891 / JCM 16421 / I3</strain>
    </source>
</reference>
<reference key="2">
    <citation type="journal article" date="2021" name="Protein Expr. Purif.">
        <title>Expression and characterization of a thermotolerant and pH-stable hyaluronate lyase from Thermasporomyces composti DSM22891.</title>
        <authorList>
            <person name="Wang X."/>
            <person name="Zhang S."/>
            <person name="Wu H."/>
            <person name="Li Y."/>
            <person name="Yu W."/>
            <person name="Han F."/>
        </authorList>
    </citation>
    <scope>FUNCTION</scope>
    <scope>CATALYTIC ACTIVITY</scope>
    <scope>ACTIVITY REGULATION</scope>
    <scope>BIOPHYSICOCHEMICAL PROPERTIES</scope>
    <scope>BIOTECHNOLOGY</scope>
    <source>
        <strain>DSM 22891 / JCM 16421 / I3</strain>
    </source>
</reference>